<dbReference type="EMBL" id="CR954253">
    <property type="protein sequence ID" value="CAI97551.1"/>
    <property type="molecule type" value="Genomic_DNA"/>
</dbReference>
<dbReference type="EMBL" id="X61190">
    <property type="protein sequence ID" value="CAA43493.1"/>
    <property type="molecule type" value="Genomic_DNA"/>
</dbReference>
<dbReference type="PIR" id="S16047">
    <property type="entry name" value="S16047"/>
</dbReference>
<dbReference type="RefSeq" id="WP_003623519.1">
    <property type="nucleotide sequence ID" value="NZ_JQAV01000001.1"/>
</dbReference>
<dbReference type="SMR" id="P31672"/>
<dbReference type="STRING" id="390333.Ldb0724"/>
<dbReference type="KEGG" id="ldb:Ldb0724"/>
<dbReference type="PATRIC" id="fig|390333.13.peg.77"/>
<dbReference type="eggNOG" id="COG1104">
    <property type="taxonomic scope" value="Bacteria"/>
</dbReference>
<dbReference type="HOGENOM" id="CLU_003433_0_0_9"/>
<dbReference type="BioCyc" id="LDEL390333:LDB_RS03160-MONOMER"/>
<dbReference type="Proteomes" id="UP000001259">
    <property type="component" value="Chromosome"/>
</dbReference>
<dbReference type="GO" id="GO:0003824">
    <property type="term" value="F:catalytic activity"/>
    <property type="evidence" value="ECO:0007669"/>
    <property type="project" value="UniProtKB-ARBA"/>
</dbReference>
<dbReference type="GO" id="GO:0051536">
    <property type="term" value="F:iron-sulfur cluster binding"/>
    <property type="evidence" value="ECO:0007669"/>
    <property type="project" value="UniProtKB-KW"/>
</dbReference>
<dbReference type="GO" id="GO:0046872">
    <property type="term" value="F:metal ion binding"/>
    <property type="evidence" value="ECO:0007669"/>
    <property type="project" value="UniProtKB-KW"/>
</dbReference>
<dbReference type="FunFam" id="3.40.640.10:FF:000084">
    <property type="entry name" value="IscS-like cysteine desulfurase"/>
    <property type="match status" value="1"/>
</dbReference>
<dbReference type="Gene3D" id="1.10.260.50">
    <property type="match status" value="1"/>
</dbReference>
<dbReference type="Gene3D" id="3.90.1150.10">
    <property type="entry name" value="Aspartate Aminotransferase, domain 1"/>
    <property type="match status" value="1"/>
</dbReference>
<dbReference type="Gene3D" id="3.40.640.10">
    <property type="entry name" value="Type I PLP-dependent aspartate aminotransferase-like (Major domain)"/>
    <property type="match status" value="1"/>
</dbReference>
<dbReference type="InterPro" id="IPR000192">
    <property type="entry name" value="Aminotrans_V_dom"/>
</dbReference>
<dbReference type="InterPro" id="IPR020578">
    <property type="entry name" value="Aminotrans_V_PyrdxlP_BS"/>
</dbReference>
<dbReference type="InterPro" id="IPR016454">
    <property type="entry name" value="Cysteine_dSase"/>
</dbReference>
<dbReference type="InterPro" id="IPR015424">
    <property type="entry name" value="PyrdxlP-dep_Trfase"/>
</dbReference>
<dbReference type="InterPro" id="IPR015421">
    <property type="entry name" value="PyrdxlP-dep_Trfase_major"/>
</dbReference>
<dbReference type="InterPro" id="IPR015422">
    <property type="entry name" value="PyrdxlP-dep_Trfase_small"/>
</dbReference>
<dbReference type="PANTHER" id="PTHR11601:SF50">
    <property type="entry name" value="CYSTEINE DESULFURASE ISCS 2-RELATED"/>
    <property type="match status" value="1"/>
</dbReference>
<dbReference type="PANTHER" id="PTHR11601">
    <property type="entry name" value="CYSTEINE DESULFURYLASE FAMILY MEMBER"/>
    <property type="match status" value="1"/>
</dbReference>
<dbReference type="Pfam" id="PF00266">
    <property type="entry name" value="Aminotran_5"/>
    <property type="match status" value="1"/>
</dbReference>
<dbReference type="PIRSF" id="PIRSF005572">
    <property type="entry name" value="NifS"/>
    <property type="match status" value="1"/>
</dbReference>
<dbReference type="SUPFAM" id="SSF53383">
    <property type="entry name" value="PLP-dependent transferases"/>
    <property type="match status" value="1"/>
</dbReference>
<dbReference type="PROSITE" id="PS00595">
    <property type="entry name" value="AA_TRANSFER_CLASS_5"/>
    <property type="match status" value="1"/>
</dbReference>
<name>NIFS_LACDA</name>
<accession>P31672</accession>
<accession>Q1GAV2</accession>
<proteinExistence type="inferred from homology"/>
<protein>
    <recommendedName>
        <fullName evidence="4">NifS/IcsS protein homolog</fullName>
    </recommendedName>
</protein>
<reference key="1">
    <citation type="journal article" date="2006" name="Proc. Natl. Acad. Sci. U.S.A.">
        <title>The complete genome sequence of Lactobacillus bulgaricus reveals extensive and ongoing reductive evolution.</title>
        <authorList>
            <person name="van de Guchte M."/>
            <person name="Penaud S."/>
            <person name="Grimaldi C."/>
            <person name="Barbe V."/>
            <person name="Bryson K."/>
            <person name="Nicolas P."/>
            <person name="Robert C."/>
            <person name="Oztas S."/>
            <person name="Mangenot S."/>
            <person name="Couloux A."/>
            <person name="Loux V."/>
            <person name="Dervyn R."/>
            <person name="Bossy R."/>
            <person name="Bolotin A."/>
            <person name="Batto J.-M."/>
            <person name="Walunas T."/>
            <person name="Gibrat J.-F."/>
            <person name="Bessieres P."/>
            <person name="Weissenbach J."/>
            <person name="Ehrlich S.D."/>
            <person name="Maguin E."/>
        </authorList>
    </citation>
    <scope>NUCLEOTIDE SEQUENCE [LARGE SCALE GENOMIC DNA]</scope>
    <source>
        <strain>ATCC 11842 / DSM 20081 / BCRC 10696 / JCM 1002 / NBRC 13953 / NCIMB 11778 / NCTC 12712 / WDCM 00102 / Lb 14</strain>
    </source>
</reference>
<reference key="2">
    <citation type="journal article" date="1994" name="Biochimie">
        <title>A Lactobacillus nifS-like gene suppresses an Escherichia coli transaminase B mutation.</title>
        <authorList>
            <person name="Leong-Morgenthaler P.M."/>
            <person name="Oliver S."/>
            <person name="Soell D."/>
        </authorList>
    </citation>
    <scope>NUCLEOTIDE SEQUENCE [GENOMIC DNA] OF 12-366</scope>
</reference>
<comment type="cofactor">
    <cofactor evidence="2">
        <name>pyridoxal 5'-phosphate</name>
        <dbReference type="ChEBI" id="CHEBI:597326"/>
    </cofactor>
</comment>
<comment type="similarity">
    <text evidence="4">Belongs to the class-V pyridoxal-phosphate-dependent aminotransferase family. NifS/IscS subfamily.</text>
</comment>
<organism>
    <name type="scientific">Lactobacillus delbrueckii subsp. bulgaricus (strain ATCC 11842 / DSM 20081 / BCRC 10696 / JCM 1002 / NBRC 13953 / NCIMB 11778 / NCTC 12712 / WDCM 00102 / Lb 14)</name>
    <dbReference type="NCBI Taxonomy" id="390333"/>
    <lineage>
        <taxon>Bacteria</taxon>
        <taxon>Bacillati</taxon>
        <taxon>Bacillota</taxon>
        <taxon>Bacilli</taxon>
        <taxon>Lactobacillales</taxon>
        <taxon>Lactobacillaceae</taxon>
        <taxon>Lactobacillus</taxon>
    </lineage>
</organism>
<feature type="chain" id="PRO_0000150290" description="NifS/IcsS protein homolog">
    <location>
        <begin position="1"/>
        <end position="385"/>
    </location>
</feature>
<feature type="active site" description="Cysteine persulfide intermediate" evidence="2">
    <location>
        <position position="325"/>
    </location>
</feature>
<feature type="binding site" evidence="3">
    <location>
        <begin position="69"/>
        <end position="70"/>
    </location>
    <ligand>
        <name>pyridoxal 5'-phosphate</name>
        <dbReference type="ChEBI" id="CHEBI:597326"/>
    </ligand>
</feature>
<feature type="binding site" evidence="1">
    <location>
        <position position="149"/>
    </location>
    <ligand>
        <name>pyridoxal 5'-phosphate</name>
        <dbReference type="ChEBI" id="CHEBI:597326"/>
    </ligand>
</feature>
<feature type="binding site" evidence="3">
    <location>
        <position position="178"/>
    </location>
    <ligand>
        <name>pyridoxal 5'-phosphate</name>
        <dbReference type="ChEBI" id="CHEBI:597326"/>
    </ligand>
</feature>
<feature type="binding site" evidence="3">
    <location>
        <begin position="199"/>
        <end position="201"/>
    </location>
    <ligand>
        <name>pyridoxal 5'-phosphate</name>
        <dbReference type="ChEBI" id="CHEBI:597326"/>
    </ligand>
</feature>
<feature type="binding site" evidence="3">
    <location>
        <position position="237"/>
    </location>
    <ligand>
        <name>pyridoxal 5'-phosphate</name>
        <dbReference type="ChEBI" id="CHEBI:597326"/>
    </ligand>
</feature>
<feature type="binding site" description="via persulfide group" evidence="1">
    <location>
        <position position="325"/>
    </location>
    <ligand>
        <name>[2Fe-2S] cluster</name>
        <dbReference type="ChEBI" id="CHEBI:190135"/>
        <note>ligand shared with IscU</note>
    </ligand>
</feature>
<feature type="modified residue" description="N6-(pyridoxal phosphate)lysine" evidence="3">
    <location>
        <position position="202"/>
    </location>
</feature>
<gene>
    <name type="ordered locus">Ldb0724</name>
</gene>
<keyword id="KW-0408">Iron</keyword>
<keyword id="KW-0411">Iron-sulfur</keyword>
<keyword id="KW-0479">Metal-binding</keyword>
<keyword id="KW-0663">Pyridoxal phosphate</keyword>
<keyword id="KW-1185">Reference proteome</keyword>
<evidence type="ECO:0000250" key="1">
    <source>
        <dbReference type="UniProtKB" id="O29689"/>
    </source>
</evidence>
<evidence type="ECO:0000250" key="2">
    <source>
        <dbReference type="UniProtKB" id="P05341"/>
    </source>
</evidence>
<evidence type="ECO:0000250" key="3">
    <source>
        <dbReference type="UniProtKB" id="P0A6B9"/>
    </source>
</evidence>
<evidence type="ECO:0000305" key="4"/>
<sequence>MIYFDNSATTKMAPKALETYSQVVTKIWGNPSSLHKLGDRAHGLLEASRKQVADLLGVNTDEIYFTSGGTESNNTAIKGTAWAKREFGKHIITSSVEHASVANTFTELENLGFRVTRLPVDKEGRVNPEDLKAALDKDTTLVSIMGVNNEIGTIQPIKEISEILADYPNIHFHVDNVQALGKGIWDQVFTSRVDMMSFSSHKFHGPRGIGILYKKRGRMLMPLCEGGGQEKGLRSGTENLAAIAAMAKAARLLLTDEKEKADREYAIKEKISKYLAGKPGIHIFSPLKADFAPHILCFALEGIRGETLVHTLEDQDIYISTTSACASKKADEASTLVAMKTPDAIATSAVRLSFDESNTLEEADEFIAAFDEIYQHFSKINHLGE</sequence>